<proteinExistence type="evidence at protein level"/>
<dbReference type="EMBL" id="X59989">
    <property type="protein sequence ID" value="CAA42606.1"/>
    <property type="molecule type" value="Genomic_DNA"/>
</dbReference>
<dbReference type="EMBL" id="V00379">
    <property type="protein sequence ID" value="CAA23678.1"/>
    <property type="molecule type" value="mRNA"/>
</dbReference>
<dbReference type="EMBL" id="V00380">
    <property type="protein sequence ID" value="CAA23679.1"/>
    <property type="molecule type" value="mRNA"/>
</dbReference>
<dbReference type="EMBL" id="V00410">
    <property type="protein sequence ID" value="CAA23701.1"/>
    <property type="molecule type" value="Genomic_DNA"/>
</dbReference>
<dbReference type="EMBL" id="M15379">
    <property type="protein sequence ID" value="AAA48582.1"/>
    <property type="status" value="ALT_SEQ"/>
    <property type="molecule type" value="Genomic_DNA"/>
</dbReference>
<dbReference type="EMBL" id="AY016020">
    <property type="protein sequence ID" value="AAL35404.1"/>
    <property type="molecule type" value="Genomic_DNA"/>
</dbReference>
<dbReference type="EMBL" id="AF098919">
    <property type="protein sequence ID" value="AAM09073.1"/>
    <property type="molecule type" value="Genomic_DNA"/>
</dbReference>
<dbReference type="EMBL" id="AF125311">
    <property type="protein sequence ID" value="AAD32581.1"/>
    <property type="molecule type" value="Genomic_DNA"/>
</dbReference>
<dbReference type="EMBL" id="M35068">
    <property type="protein sequence ID" value="AAA48583.1"/>
    <property type="molecule type" value="mRNA"/>
</dbReference>
<dbReference type="PIR" id="S18673">
    <property type="entry name" value="HACH2"/>
</dbReference>
<dbReference type="RefSeq" id="NP_001004376.1">
    <property type="nucleotide sequence ID" value="NM_001004376.3"/>
</dbReference>
<dbReference type="PDB" id="3BEV">
    <property type="method" value="X-ray"/>
    <property type="resolution" value="2.10 A"/>
    <property type="chains" value="C=20-30"/>
</dbReference>
<dbReference type="PDB" id="5AD0">
    <property type="method" value="X-ray"/>
    <property type="resolution" value="2.84 A"/>
    <property type="chains" value="C=20-30"/>
</dbReference>
<dbReference type="PDBsum" id="3BEV"/>
<dbReference type="PDBsum" id="5AD0"/>
<dbReference type="SMR" id="P01994"/>
<dbReference type="FunCoup" id="P01994">
    <property type="interactions" value="442"/>
</dbReference>
<dbReference type="STRING" id="9031.ENSGALP00000050043"/>
<dbReference type="PaxDb" id="9031-ENSGALP00000038904"/>
<dbReference type="GeneID" id="416652"/>
<dbReference type="KEGG" id="gga:416652"/>
<dbReference type="CTD" id="3039"/>
<dbReference type="VEuPathDB" id="HostDB:geneid_416652"/>
<dbReference type="eggNOG" id="KOG3378">
    <property type="taxonomic scope" value="Eukaryota"/>
</dbReference>
<dbReference type="HOGENOM" id="CLU_003827_10_2_1"/>
<dbReference type="InParanoid" id="P01994"/>
<dbReference type="OMA" id="MFTSFPT"/>
<dbReference type="OrthoDB" id="8751793at2759"/>
<dbReference type="PhylomeDB" id="P01994"/>
<dbReference type="Reactome" id="R-GGA-1237044">
    <property type="pathway name" value="Erythrocytes take up carbon dioxide and release oxygen"/>
</dbReference>
<dbReference type="Reactome" id="R-GGA-1247673">
    <property type="pathway name" value="Erythrocytes take up oxygen and release carbon dioxide"/>
</dbReference>
<dbReference type="Reactome" id="R-GGA-2168880">
    <property type="pathway name" value="Scavenging of heme from plasma"/>
</dbReference>
<dbReference type="Reactome" id="R-GGA-9707564">
    <property type="pathway name" value="Cytoprotection by HMOX1"/>
</dbReference>
<dbReference type="Reactome" id="R-GGA-9707616">
    <property type="pathway name" value="Heme signaling"/>
</dbReference>
<dbReference type="EvolutionaryTrace" id="P01994"/>
<dbReference type="PRO" id="PR:P01994"/>
<dbReference type="Proteomes" id="UP000000539">
    <property type="component" value="Chromosome 14"/>
</dbReference>
<dbReference type="Bgee" id="ENSGALG00000043234">
    <property type="expression patterns" value="Expressed in lung and 12 other cell types or tissues"/>
</dbReference>
<dbReference type="GO" id="GO:0005615">
    <property type="term" value="C:extracellular space"/>
    <property type="evidence" value="ECO:0000314"/>
    <property type="project" value="AgBase"/>
</dbReference>
<dbReference type="GO" id="GO:0031838">
    <property type="term" value="C:haptoglobin-hemoglobin complex"/>
    <property type="evidence" value="ECO:0000318"/>
    <property type="project" value="GO_Central"/>
</dbReference>
<dbReference type="GO" id="GO:0005833">
    <property type="term" value="C:hemoglobin complex"/>
    <property type="evidence" value="ECO:0000318"/>
    <property type="project" value="GO_Central"/>
</dbReference>
<dbReference type="GO" id="GO:0020037">
    <property type="term" value="F:heme binding"/>
    <property type="evidence" value="ECO:0000318"/>
    <property type="project" value="GO_Central"/>
</dbReference>
<dbReference type="GO" id="GO:0005506">
    <property type="term" value="F:iron ion binding"/>
    <property type="evidence" value="ECO:0007669"/>
    <property type="project" value="InterPro"/>
</dbReference>
<dbReference type="GO" id="GO:0019825">
    <property type="term" value="F:oxygen binding"/>
    <property type="evidence" value="ECO:0000318"/>
    <property type="project" value="GO_Central"/>
</dbReference>
<dbReference type="GO" id="GO:0005344">
    <property type="term" value="F:oxygen carrier activity"/>
    <property type="evidence" value="ECO:0000318"/>
    <property type="project" value="GO_Central"/>
</dbReference>
<dbReference type="GO" id="GO:0098869">
    <property type="term" value="P:cellular oxidant detoxification"/>
    <property type="evidence" value="ECO:0007669"/>
    <property type="project" value="GOC"/>
</dbReference>
<dbReference type="GO" id="GO:0042744">
    <property type="term" value="P:hydrogen peroxide catabolic process"/>
    <property type="evidence" value="ECO:0000318"/>
    <property type="project" value="GO_Central"/>
</dbReference>
<dbReference type="CDD" id="cd08927">
    <property type="entry name" value="Hb-alpha-like"/>
    <property type="match status" value="1"/>
</dbReference>
<dbReference type="FunFam" id="1.10.490.10:FF:000002">
    <property type="entry name" value="Hemoglobin subunit alpha"/>
    <property type="match status" value="1"/>
</dbReference>
<dbReference type="Gene3D" id="1.10.490.10">
    <property type="entry name" value="Globins"/>
    <property type="match status" value="1"/>
</dbReference>
<dbReference type="InterPro" id="IPR000971">
    <property type="entry name" value="Globin"/>
</dbReference>
<dbReference type="InterPro" id="IPR009050">
    <property type="entry name" value="Globin-like_sf"/>
</dbReference>
<dbReference type="InterPro" id="IPR012292">
    <property type="entry name" value="Globin/Proto"/>
</dbReference>
<dbReference type="InterPro" id="IPR002338">
    <property type="entry name" value="Hemoglobin_a-typ"/>
</dbReference>
<dbReference type="InterPro" id="IPR050056">
    <property type="entry name" value="Hemoglobin_oxygen_transport"/>
</dbReference>
<dbReference type="InterPro" id="IPR002339">
    <property type="entry name" value="Hemoglobin_pi"/>
</dbReference>
<dbReference type="PANTHER" id="PTHR11442">
    <property type="entry name" value="HEMOGLOBIN FAMILY MEMBER"/>
    <property type="match status" value="1"/>
</dbReference>
<dbReference type="PANTHER" id="PTHR11442:SF48">
    <property type="entry name" value="HEMOGLOBIN SUBUNIT ALPHA"/>
    <property type="match status" value="1"/>
</dbReference>
<dbReference type="Pfam" id="PF00042">
    <property type="entry name" value="Globin"/>
    <property type="match status" value="1"/>
</dbReference>
<dbReference type="PRINTS" id="PR00612">
    <property type="entry name" value="ALPHAHAEM"/>
</dbReference>
<dbReference type="PRINTS" id="PR00815">
    <property type="entry name" value="PIHAEM"/>
</dbReference>
<dbReference type="SUPFAM" id="SSF46458">
    <property type="entry name" value="Globin-like"/>
    <property type="match status" value="1"/>
</dbReference>
<dbReference type="PROSITE" id="PS01033">
    <property type="entry name" value="GLOBIN"/>
    <property type="match status" value="1"/>
</dbReference>
<evidence type="ECO:0000255" key="1">
    <source>
        <dbReference type="PROSITE-ProRule" id="PRU00238"/>
    </source>
</evidence>
<evidence type="ECO:0000305" key="2"/>
<evidence type="ECO:0007829" key="3">
    <source>
        <dbReference type="PDB" id="3BEV"/>
    </source>
</evidence>
<protein>
    <recommendedName>
        <fullName>Hemoglobin subunit alpha-A</fullName>
    </recommendedName>
    <alternativeName>
        <fullName>Alpha-A-globin</fullName>
    </alternativeName>
    <alternativeName>
        <fullName>Hemoglobin alpha-A chain</fullName>
    </alternativeName>
</protein>
<gene>
    <name type="primary">HBAA</name>
</gene>
<accession>P01994</accession>
<accession>Q9PWP3</accession>
<sequence length="142" mass="15429">MVLSAADKNNVKGIFTKIAGHAEEYGAETLERMFTTYPPTKTYFPHFDLSHGSAQIKGHGKKVVAALIEAANHIDDIAGTLSKLSDLHAHKLRVDPVNFKLLGQCFLVVVAIHHPAALTPEVHASLDKFLCAVGTVLTAKYR</sequence>
<name>HBA_CHICK</name>
<comment type="function">
    <text>Involved in oxygen transport from the lung to the various peripheral tissues.</text>
</comment>
<comment type="subunit">
    <text>Heterotetramer of two alpha chains and two beta chains.</text>
</comment>
<comment type="tissue specificity">
    <text>Red blood cells.</text>
</comment>
<comment type="miscellaneous">
    <text>This alpha chain is from the adult major tetrameric component, which has been called hemoglobin A or AII.</text>
</comment>
<comment type="similarity">
    <text evidence="1">Belongs to the globin family.</text>
</comment>
<keyword id="KW-0002">3D-structure</keyword>
<keyword id="KW-0903">Direct protein sequencing</keyword>
<keyword id="KW-0349">Heme</keyword>
<keyword id="KW-0408">Iron</keyword>
<keyword id="KW-0479">Metal-binding</keyword>
<keyword id="KW-0561">Oxygen transport</keyword>
<keyword id="KW-1185">Reference proteome</keyword>
<keyword id="KW-0813">Transport</keyword>
<reference key="1">
    <citation type="journal article" date="1991" name="Nucleic Acids Res.">
        <title>Adult chicken alpha-globin gene expression in transfected QT6 quail cells: evidence for a negative regulatory element in the alpha D gene region.</title>
        <authorList>
            <person name="Lewis W."/>
            <person name="Lee J.D."/>
            <person name="Dodgson J.B."/>
        </authorList>
    </citation>
    <scope>NUCLEOTIDE SEQUENCE</scope>
    <source>
        <strain>White leghorn</strain>
    </source>
</reference>
<reference key="2">
    <citation type="journal article" date="1982" name="Nature">
        <title>No evidence for 'stress' alpha-globin genes in chicken.</title>
        <authorList>
            <person name="Knoechel W."/>
            <person name="Wittig B."/>
            <person name="Wittig S."/>
            <person name="John M.E."/>
            <person name="Grundmann U."/>
            <person name="Oberthur W."/>
            <person name="Godovac J."/>
            <person name="Braunitzer G."/>
        </authorList>
    </citation>
    <scope>NUCLEOTIDE SEQUENCE</scope>
</reference>
<reference key="3">
    <citation type="journal article" date="1983" name="J. Biol. Chem.">
        <title>The nucleotide sequence of the adult chicken alpha-globin genes.</title>
        <authorList>
            <person name="Dodgson J.B."/>
            <person name="Engel J.D."/>
        </authorList>
    </citation>
    <scope>NUCLEOTIDE SEQUENCE</scope>
</reference>
<reference key="4">
    <citation type="journal article" date="1981" name="Proc. Natl. Acad. Sci. U.S.A.">
        <title>Adult chicken alpha-globin genes alpha A and alpha D: no anemic shock alpha-globin exists in domestic chickens.</title>
        <authorList>
            <person name="Dodgson J.B."/>
            <person name="McCune K.C."/>
            <person name="Rusling D.J."/>
            <person name="Krust A."/>
            <person name="Engel J.D."/>
        </authorList>
    </citation>
    <scope>NUCLEOTIDE SEQUENCE [GENOMIC DNA]</scope>
</reference>
<reference key="5">
    <citation type="journal article" date="1980" name="J. Biol. Chem.">
        <title>Chicken globin genes. Nucleotide sequence of cDNA clones coding for the alpha-globin expressed during hemolytic anemia.</title>
        <authorList>
            <person name="Richards R.I."/>
            <person name="Wells J.R.E."/>
        </authorList>
    </citation>
    <scope>NUCLEOTIDE SEQUENCE</scope>
</reference>
<reference key="6">
    <citation type="journal article" date="1981" name="Gene">
        <title>Complete nucleotide sequence of a chicken alpha-globin cDNA.</title>
        <authorList>
            <person name="Liu A.Y."/>
            <person name="Salser W."/>
        </authorList>
    </citation>
    <scope>NUCLEOTIDE SEQUENCE</scope>
</reference>
<reference key="7">
    <citation type="journal article" date="1980" name="Nucleic Acids Res.">
        <title>Complete nucleotide sequence of a cloned chicken alpha-globin cDNA.</title>
        <authorList>
            <person name="Deacon N.J."/>
            <person name="Shine J."/>
            <person name="Naora H."/>
        </authorList>
    </citation>
    <scope>NUCLEOTIDE SEQUENCE [MRNA]</scope>
</reference>
<reference key="8">
    <citation type="journal article" date="2001" name="Hum. Mol. Genet.">
        <title>Comparative genome analysis delimits a chromosomal domain and identifies key regulatory elements in the alpha globin cluster.</title>
        <authorList>
            <person name="Flint J."/>
            <person name="Tufarelli C."/>
            <person name="Peden J."/>
            <person name="Clark K."/>
            <person name="Daniels R.J."/>
            <person name="Hardison R."/>
            <person name="Miller W."/>
            <person name="Philipsen S."/>
            <person name="Tan-Un K.C."/>
            <person name="McMorrow T."/>
            <person name="Frampton J."/>
            <person name="Alter B.P."/>
            <person name="Frischauf A.-M."/>
            <person name="Higgs D.R."/>
        </authorList>
    </citation>
    <scope>NUCLEOTIDE SEQUENCE</scope>
</reference>
<reference key="9">
    <citation type="submission" date="2002-04" db="EMBL/GenBank/DDBJ databases">
        <title>Organization of the chicken domain of alpha-globin genes.</title>
        <authorList>
            <person name="Zhao Z."/>
            <person name="Sjakste N."/>
            <person name="De Moura-Gallo C.V."/>
            <person name="Ioudinkova E.S."/>
            <person name="Razin S.V."/>
            <person name="Scherrer K."/>
        </authorList>
    </citation>
    <scope>NUCLEOTIDE SEQUENCE</scope>
</reference>
<reference key="10">
    <citation type="submission" date="1999-02" db="EMBL/GenBank/DDBJ databases">
        <title>Easy access to the alpha-A-globin gene of galliform birds by EPIC-PCR.</title>
        <authorList>
            <person name="Fehrer J."/>
        </authorList>
    </citation>
    <scope>NUCLEOTIDE SEQUENCE [GENOMIC DNA] OF 12-111</scope>
    <source>
        <strain>White leghorn</strain>
    </source>
</reference>
<reference key="11">
    <citation type="journal article" date="1978" name="Nature">
        <title>Identification of a new chicken alpha-globin structural gene by complementary DNA cloning.</title>
        <authorList>
            <person name="Cummings I.W."/>
            <person name="Liu A.Y."/>
            <person name="Salser W.A."/>
        </authorList>
    </citation>
    <scope>NUCLEOTIDE SEQUENCE OF 61-84</scope>
</reference>
<reference key="12">
    <citation type="journal article" date="1972" name="Int. J. Pept. Protein Res.">
        <title>Sequence studies on the tryptic peptides and the chymotryptic peptides from the alpha polypeptide chain of aII component of the chicken hemoglobin. Biochemical studies on hemoglobins and myoglobins. 8.</title>
        <authorList>
            <person name="Matsuda G."/>
            <person name="Takei H."/>
            <person name="Wu K.C."/>
            <person name="Shiozawa T."/>
            <person name="Ota Y."/>
        </authorList>
    </citation>
    <scope>PRELIMINARY PROTEIN SEQUENCE OF 2-142</scope>
</reference>
<feature type="initiator methionine" description="Removed">
    <location>
        <position position="1"/>
    </location>
</feature>
<feature type="chain" id="PRO_0000052599" description="Hemoglobin subunit alpha-A">
    <location>
        <begin position="2"/>
        <end position="142"/>
    </location>
</feature>
<feature type="domain" description="Globin" evidence="1">
    <location>
        <begin position="2"/>
        <end position="142"/>
    </location>
</feature>
<feature type="binding site" evidence="1">
    <location>
        <position position="59"/>
    </location>
    <ligand>
        <name>O2</name>
        <dbReference type="ChEBI" id="CHEBI:15379"/>
    </ligand>
</feature>
<feature type="binding site" description="proximal binding residue" evidence="1">
    <location>
        <position position="88"/>
    </location>
    <ligand>
        <name>heme b</name>
        <dbReference type="ChEBI" id="CHEBI:60344"/>
    </ligand>
    <ligandPart>
        <name>Fe</name>
        <dbReference type="ChEBI" id="CHEBI:18248"/>
    </ligandPart>
</feature>
<feature type="sequence conflict" description="In Ref. 10; AAD32581." evidence="2" ref="10">
    <original>H</original>
    <variation>D</variation>
    <location>
        <position position="90"/>
    </location>
</feature>
<feature type="sequence conflict" description="In Ref. 7; CAA23678." evidence="2" ref="7">
    <original>RVD</original>
    <variation>TGG</variation>
    <location>
        <begin position="93"/>
        <end position="95"/>
    </location>
</feature>
<feature type="sequence conflict" description="In Ref. 6." evidence="2" ref="6">
    <original>A</original>
    <variation>T</variation>
    <location>
        <position position="111"/>
    </location>
</feature>
<feature type="sequence conflict" description="In Ref. 7; CAA23678." evidence="2" ref="7">
    <original>E</original>
    <variation>K</variation>
    <location>
        <position position="121"/>
    </location>
</feature>
<feature type="sequence conflict" description="In Ref. 6." evidence="2" ref="6">
    <original>V</original>
    <variation>I</variation>
    <location>
        <position position="122"/>
    </location>
</feature>
<feature type="sequence conflict" description="In Ref. 7; CAA23678." evidence="2" ref="7">
    <original>K</original>
    <variation>N</variation>
    <location>
        <position position="128"/>
    </location>
</feature>
<feature type="helix" evidence="3">
    <location>
        <begin position="25"/>
        <end position="28"/>
    </location>
</feature>
<organism>
    <name type="scientific">Gallus gallus</name>
    <name type="common">Chicken</name>
    <dbReference type="NCBI Taxonomy" id="9031"/>
    <lineage>
        <taxon>Eukaryota</taxon>
        <taxon>Metazoa</taxon>
        <taxon>Chordata</taxon>
        <taxon>Craniata</taxon>
        <taxon>Vertebrata</taxon>
        <taxon>Euteleostomi</taxon>
        <taxon>Archelosauria</taxon>
        <taxon>Archosauria</taxon>
        <taxon>Dinosauria</taxon>
        <taxon>Saurischia</taxon>
        <taxon>Theropoda</taxon>
        <taxon>Coelurosauria</taxon>
        <taxon>Aves</taxon>
        <taxon>Neognathae</taxon>
        <taxon>Galloanserae</taxon>
        <taxon>Galliformes</taxon>
        <taxon>Phasianidae</taxon>
        <taxon>Phasianinae</taxon>
        <taxon>Gallus</taxon>
    </lineage>
</organism>